<name>GATY_ECO57</name>
<feature type="chain" id="PRO_0000355333" description="D-tagatose-1,6-bisphosphate aldolase subunit GatY">
    <location>
        <begin position="1"/>
        <end position="284"/>
    </location>
</feature>
<feature type="active site" description="Proton donor" evidence="1">
    <location>
        <position position="82"/>
    </location>
</feature>
<feature type="binding site" evidence="1">
    <location>
        <position position="83"/>
    </location>
    <ligand>
        <name>Zn(2+)</name>
        <dbReference type="ChEBI" id="CHEBI:29105"/>
        <note>catalytic</note>
    </ligand>
</feature>
<feature type="binding site" evidence="1">
    <location>
        <position position="180"/>
    </location>
    <ligand>
        <name>Zn(2+)</name>
        <dbReference type="ChEBI" id="CHEBI:29105"/>
        <note>catalytic</note>
    </ligand>
</feature>
<feature type="binding site" evidence="1">
    <location>
        <position position="181"/>
    </location>
    <ligand>
        <name>dihydroxyacetone phosphate</name>
        <dbReference type="ChEBI" id="CHEBI:57642"/>
    </ligand>
</feature>
<feature type="binding site" evidence="1">
    <location>
        <position position="208"/>
    </location>
    <ligand>
        <name>Zn(2+)</name>
        <dbReference type="ChEBI" id="CHEBI:29105"/>
        <note>catalytic</note>
    </ligand>
</feature>
<feature type="binding site" evidence="1">
    <location>
        <begin position="209"/>
        <end position="211"/>
    </location>
    <ligand>
        <name>dihydroxyacetone phosphate</name>
        <dbReference type="ChEBI" id="CHEBI:57642"/>
    </ligand>
</feature>
<feature type="binding site" evidence="1">
    <location>
        <begin position="230"/>
        <end position="233"/>
    </location>
    <ligand>
        <name>dihydroxyacetone phosphate</name>
        <dbReference type="ChEBI" id="CHEBI:57642"/>
    </ligand>
</feature>
<accession>Q8X4R2</accession>
<accession>Q7ACL1</accession>
<dbReference type="EC" id="4.1.2.40" evidence="1"/>
<dbReference type="EMBL" id="AE005174">
    <property type="protein sequence ID" value="AAG57153.1"/>
    <property type="status" value="ALT_INIT"/>
    <property type="molecule type" value="Genomic_DNA"/>
</dbReference>
<dbReference type="EMBL" id="BA000007">
    <property type="protein sequence ID" value="BAB36322.2"/>
    <property type="molecule type" value="Genomic_DNA"/>
</dbReference>
<dbReference type="PIR" id="C90991">
    <property type="entry name" value="C90991"/>
</dbReference>
<dbReference type="PIR" id="E85836">
    <property type="entry name" value="E85836"/>
</dbReference>
<dbReference type="RefSeq" id="NP_310926.2">
    <property type="nucleotide sequence ID" value="NC_002695.1"/>
</dbReference>
<dbReference type="RefSeq" id="WP_001301486.1">
    <property type="nucleotide sequence ID" value="NZ_VOAI01000013.1"/>
</dbReference>
<dbReference type="SMR" id="Q8X4R2"/>
<dbReference type="STRING" id="155864.Z3259"/>
<dbReference type="GeneID" id="916602"/>
<dbReference type="KEGG" id="ece:Z3259"/>
<dbReference type="KEGG" id="ecs:ECs_2899"/>
<dbReference type="PATRIC" id="fig|386585.9.peg.3031"/>
<dbReference type="eggNOG" id="COG0191">
    <property type="taxonomic scope" value="Bacteria"/>
</dbReference>
<dbReference type="HOGENOM" id="CLU_040088_0_1_6"/>
<dbReference type="OMA" id="TCYSAIR"/>
<dbReference type="UniPathway" id="UPA00704">
    <property type="reaction ID" value="UER00716"/>
</dbReference>
<dbReference type="Proteomes" id="UP000000558">
    <property type="component" value="Chromosome"/>
</dbReference>
<dbReference type="Proteomes" id="UP000002519">
    <property type="component" value="Chromosome"/>
</dbReference>
<dbReference type="GO" id="GO:0005829">
    <property type="term" value="C:cytosol"/>
    <property type="evidence" value="ECO:0007669"/>
    <property type="project" value="TreeGrafter"/>
</dbReference>
<dbReference type="GO" id="GO:0009025">
    <property type="term" value="F:tagatose-bisphosphate aldolase activity"/>
    <property type="evidence" value="ECO:0007669"/>
    <property type="project" value="UniProtKB-UniRule"/>
</dbReference>
<dbReference type="GO" id="GO:0008270">
    <property type="term" value="F:zinc ion binding"/>
    <property type="evidence" value="ECO:0007669"/>
    <property type="project" value="UniProtKB-UniRule"/>
</dbReference>
<dbReference type="GO" id="GO:2001059">
    <property type="term" value="P:D-tagatose 6-phosphate catabolic process"/>
    <property type="evidence" value="ECO:0007669"/>
    <property type="project" value="UniProtKB-UniRule"/>
</dbReference>
<dbReference type="GO" id="GO:0019404">
    <property type="term" value="P:galactitol catabolic process"/>
    <property type="evidence" value="ECO:0007669"/>
    <property type="project" value="InterPro"/>
</dbReference>
<dbReference type="CDD" id="cd00947">
    <property type="entry name" value="TBP_aldolase_IIB"/>
    <property type="match status" value="1"/>
</dbReference>
<dbReference type="FunFam" id="3.20.20.70:FF:000043">
    <property type="entry name" value="D-tagatose-1,6-bisphosphate aldolase subunit GatY"/>
    <property type="match status" value="1"/>
</dbReference>
<dbReference type="Gene3D" id="3.20.20.70">
    <property type="entry name" value="Aldolase class I"/>
    <property type="match status" value="1"/>
</dbReference>
<dbReference type="HAMAP" id="MF_01294">
    <property type="entry name" value="TagBP_aldolase_GatY"/>
    <property type="match status" value="1"/>
</dbReference>
<dbReference type="InterPro" id="IPR013785">
    <property type="entry name" value="Aldolase_TIM"/>
</dbReference>
<dbReference type="InterPro" id="IPR050246">
    <property type="entry name" value="Class_II_FBP_aldolase"/>
</dbReference>
<dbReference type="InterPro" id="IPR000771">
    <property type="entry name" value="FBA_II"/>
</dbReference>
<dbReference type="InterPro" id="IPR011288">
    <property type="entry name" value="TagBP_ald_KbaY/GatY"/>
</dbReference>
<dbReference type="InterPro" id="IPR023955">
    <property type="entry name" value="TagBP_aldolase_GatY"/>
</dbReference>
<dbReference type="NCBIfam" id="TIGR00167">
    <property type="entry name" value="cbbA"/>
    <property type="match status" value="1"/>
</dbReference>
<dbReference type="NCBIfam" id="NF006626">
    <property type="entry name" value="PRK09195.1"/>
    <property type="match status" value="1"/>
</dbReference>
<dbReference type="NCBIfam" id="NF009374">
    <property type="entry name" value="PRK12737.1"/>
    <property type="match status" value="1"/>
</dbReference>
<dbReference type="NCBIfam" id="TIGR01858">
    <property type="entry name" value="tag_bisphos_ald"/>
    <property type="match status" value="1"/>
</dbReference>
<dbReference type="PANTHER" id="PTHR30304">
    <property type="entry name" value="D-TAGATOSE-1,6-BISPHOSPHATE ALDOLASE"/>
    <property type="match status" value="1"/>
</dbReference>
<dbReference type="PANTHER" id="PTHR30304:SF0">
    <property type="entry name" value="D-TAGATOSE-1,6-BISPHOSPHATE ALDOLASE SUBUNIT GATY-RELATED"/>
    <property type="match status" value="1"/>
</dbReference>
<dbReference type="Pfam" id="PF01116">
    <property type="entry name" value="F_bP_aldolase"/>
    <property type="match status" value="1"/>
</dbReference>
<dbReference type="PIRSF" id="PIRSF001359">
    <property type="entry name" value="F_bP_aldolase_II"/>
    <property type="match status" value="1"/>
</dbReference>
<dbReference type="SUPFAM" id="SSF51569">
    <property type="entry name" value="Aldolase"/>
    <property type="match status" value="1"/>
</dbReference>
<dbReference type="PROSITE" id="PS00602">
    <property type="entry name" value="ALDOLASE_CLASS_II_1"/>
    <property type="match status" value="1"/>
</dbReference>
<dbReference type="PROSITE" id="PS00806">
    <property type="entry name" value="ALDOLASE_CLASS_II_2"/>
    <property type="match status" value="1"/>
</dbReference>
<comment type="function">
    <text evidence="1">Catalytic subunit of the tagatose-1,6-bisphosphate aldolase GatYZ, which catalyzes the reversible aldol condensation of dihydroxyacetone phosphate (DHAP or glycerone-phosphate) with glyceraldehyde 3-phosphate (G3P) to produce tagatose 1,6-bisphosphate (TBP). Requires GatZ subunit for full activity and stability. Is involved in the catabolism of galactitol.</text>
</comment>
<comment type="catalytic activity">
    <reaction evidence="1">
        <text>D-tagatofuranose 1,6-bisphosphate = D-glyceraldehyde 3-phosphate + dihydroxyacetone phosphate</text>
        <dbReference type="Rhea" id="RHEA:22948"/>
        <dbReference type="ChEBI" id="CHEBI:57642"/>
        <dbReference type="ChEBI" id="CHEBI:58694"/>
        <dbReference type="ChEBI" id="CHEBI:59776"/>
        <dbReference type="EC" id="4.1.2.40"/>
    </reaction>
</comment>
<comment type="cofactor">
    <cofactor evidence="1">
        <name>Zn(2+)</name>
        <dbReference type="ChEBI" id="CHEBI:29105"/>
    </cofactor>
    <text evidence="1">Binds 1 zinc ion per subunit.</text>
</comment>
<comment type="pathway">
    <text evidence="1">Carbohydrate metabolism; D-tagatose 6-phosphate degradation; D-glyceraldehyde 3-phosphate and glycerone phosphate from D-tagatose 6-phosphate: step 2/2.</text>
</comment>
<comment type="subunit">
    <text evidence="1">Forms a complex with GatZ.</text>
</comment>
<comment type="similarity">
    <text evidence="1">Belongs to the class II fructose-bisphosphate aldolase family. TagBP aldolase GatY subfamily.</text>
</comment>
<comment type="sequence caution" evidence="2">
    <conflict type="erroneous initiation">
        <sequence resource="EMBL-CDS" id="AAG57153"/>
    </conflict>
    <text>Extended N-terminus.</text>
</comment>
<organism>
    <name type="scientific">Escherichia coli O157:H7</name>
    <dbReference type="NCBI Taxonomy" id="83334"/>
    <lineage>
        <taxon>Bacteria</taxon>
        <taxon>Pseudomonadati</taxon>
        <taxon>Pseudomonadota</taxon>
        <taxon>Gammaproteobacteria</taxon>
        <taxon>Enterobacterales</taxon>
        <taxon>Enterobacteriaceae</taxon>
        <taxon>Escherichia</taxon>
    </lineage>
</organism>
<protein>
    <recommendedName>
        <fullName evidence="1">D-tagatose-1,6-bisphosphate aldolase subunit GatY</fullName>
        <shortName evidence="1">TBPA</shortName>
        <shortName evidence="1">TagBP aldolase</shortName>
        <ecNumber evidence="1">4.1.2.40</ecNumber>
    </recommendedName>
    <alternativeName>
        <fullName evidence="1">D-tagatose-bisphosphate aldolase class II</fullName>
    </alternativeName>
    <alternativeName>
        <fullName evidence="1">Tagatose-bisphosphate aldolase</fullName>
    </alternativeName>
</protein>
<keyword id="KW-0298">Galactitol metabolism</keyword>
<keyword id="KW-0456">Lyase</keyword>
<keyword id="KW-0479">Metal-binding</keyword>
<keyword id="KW-1185">Reference proteome</keyword>
<keyword id="KW-0862">Zinc</keyword>
<reference key="1">
    <citation type="journal article" date="2001" name="Nature">
        <title>Genome sequence of enterohaemorrhagic Escherichia coli O157:H7.</title>
        <authorList>
            <person name="Perna N.T."/>
            <person name="Plunkett G. III"/>
            <person name="Burland V."/>
            <person name="Mau B."/>
            <person name="Glasner J.D."/>
            <person name="Rose D.J."/>
            <person name="Mayhew G.F."/>
            <person name="Evans P.S."/>
            <person name="Gregor J."/>
            <person name="Kirkpatrick H.A."/>
            <person name="Posfai G."/>
            <person name="Hackett J."/>
            <person name="Klink S."/>
            <person name="Boutin A."/>
            <person name="Shao Y."/>
            <person name="Miller L."/>
            <person name="Grotbeck E.J."/>
            <person name="Davis N.W."/>
            <person name="Lim A."/>
            <person name="Dimalanta E.T."/>
            <person name="Potamousis K."/>
            <person name="Apodaca J."/>
            <person name="Anantharaman T.S."/>
            <person name="Lin J."/>
            <person name="Yen G."/>
            <person name="Schwartz D.C."/>
            <person name="Welch R.A."/>
            <person name="Blattner F.R."/>
        </authorList>
    </citation>
    <scope>NUCLEOTIDE SEQUENCE [LARGE SCALE GENOMIC DNA]</scope>
    <source>
        <strain>O157:H7 / EDL933 / ATCC 700927 / EHEC</strain>
    </source>
</reference>
<reference key="2">
    <citation type="journal article" date="2001" name="DNA Res.">
        <title>Complete genome sequence of enterohemorrhagic Escherichia coli O157:H7 and genomic comparison with a laboratory strain K-12.</title>
        <authorList>
            <person name="Hayashi T."/>
            <person name="Makino K."/>
            <person name="Ohnishi M."/>
            <person name="Kurokawa K."/>
            <person name="Ishii K."/>
            <person name="Yokoyama K."/>
            <person name="Han C.-G."/>
            <person name="Ohtsubo E."/>
            <person name="Nakayama K."/>
            <person name="Murata T."/>
            <person name="Tanaka M."/>
            <person name="Tobe T."/>
            <person name="Iida T."/>
            <person name="Takami H."/>
            <person name="Honda T."/>
            <person name="Sasakawa C."/>
            <person name="Ogasawara N."/>
            <person name="Yasunaga T."/>
            <person name="Kuhara S."/>
            <person name="Shiba T."/>
            <person name="Hattori M."/>
            <person name="Shinagawa H."/>
        </authorList>
    </citation>
    <scope>NUCLEOTIDE SEQUENCE [LARGE SCALE GENOMIC DNA]</scope>
    <source>
        <strain>O157:H7 / Sakai / RIMD 0509952 / EHEC</strain>
    </source>
</reference>
<evidence type="ECO:0000255" key="1">
    <source>
        <dbReference type="HAMAP-Rule" id="MF_01294"/>
    </source>
</evidence>
<evidence type="ECO:0000305" key="2"/>
<sequence length="284" mass="30855">MYVVSTKQMLNNAQRGGYAVPAFNIHNLETMQVVVETAANLHAPVIIAGTPGTFTHAGTENLLALVSAMAKHYHHPLAIHLDHHTKFDDIAQKVRSGVRSVMIDASHLPFAQNISRVKEVVDFCHRFDVSVEAELGQLGGQEDDVQVNEADAFYTNPAQAREFAEATGIDSLAVAIGTAHGMYASAPALDFSRLENIRQWVNLPLVLHGASGLSTKDIQQTIKLGICKINVATELKNAFSQALKNYLTEHPEATDPRDYLQSAKSAMRDVVSKVIADCGCEGRA</sequence>
<proteinExistence type="inferred from homology"/>
<gene>
    <name evidence="1" type="primary">gatY</name>
    <name type="ordered locus">Z3259</name>
    <name type="ordered locus">ECs2899</name>
</gene>